<evidence type="ECO:0000255" key="1"/>
<evidence type="ECO:0000255" key="2">
    <source>
        <dbReference type="PROSITE-ProRule" id="PRU00521"/>
    </source>
</evidence>
<evidence type="ECO:0000305" key="3"/>
<sequence length="323" mass="35313">MSTLPTQIAPNSSTSMAPTFLLVGMPGLSGAPSWWTLPLIAVYLLSALGNGTILWIIALQPALHRPMHFFLFLLSVSDIGLVTALMPTLLGIALAGAHTVPASACLLQMVFIHVFSVMESSVLLAMSIDRALAICRPLHYPALLTNGVISKISLAISFRCLGLHLPLPFLLAYMPYCLPQVLTHSYCLHPDVARLACPEAWGAAYSLFVVLSAMGLDPLLIFFSYGLIGKVLQGVESREDRWKAGQTCAAHLSAVLLFYIPMILLALINHPELPITQHTHTLLSYVHFLLPPLINPILYSVKMKEIRKRILNRLQPRKVGGAQ</sequence>
<organism>
    <name type="scientific">Homo sapiens</name>
    <name type="common">Human</name>
    <dbReference type="NCBI Taxonomy" id="9606"/>
    <lineage>
        <taxon>Eukaryota</taxon>
        <taxon>Metazoa</taxon>
        <taxon>Chordata</taxon>
        <taxon>Craniata</taxon>
        <taxon>Vertebrata</taxon>
        <taxon>Euteleostomi</taxon>
        <taxon>Mammalia</taxon>
        <taxon>Eutheria</taxon>
        <taxon>Euarchontoglires</taxon>
        <taxon>Primates</taxon>
        <taxon>Haplorrhini</taxon>
        <taxon>Catarrhini</taxon>
        <taxon>Hominidae</taxon>
        <taxon>Homo</taxon>
    </lineage>
</organism>
<protein>
    <recommendedName>
        <fullName>Olfactory receptor 51S1</fullName>
    </recommendedName>
    <alternativeName>
        <fullName>Olfactory receptor OR11-24</fullName>
    </alternativeName>
</protein>
<accession>Q8NGJ8</accession>
<accession>B9EGZ1</accession>
<accession>Q6IFI2</accession>
<comment type="function">
    <text evidence="3">Odorant receptor.</text>
</comment>
<comment type="subcellular location">
    <subcellularLocation>
        <location>Cell membrane</location>
        <topology>Multi-pass membrane protein</topology>
    </subcellularLocation>
</comment>
<comment type="similarity">
    <text evidence="2">Belongs to the G-protein coupled receptor 1 family.</text>
</comment>
<comment type="online information" name="Human Olfactory Receptor Data Exploratorium (HORDE)">
    <link uri="http://genome.weizmann.ac.il/horde/card/index/symbol:OR51S1"/>
</comment>
<keyword id="KW-1003">Cell membrane</keyword>
<keyword id="KW-1015">Disulfide bond</keyword>
<keyword id="KW-0297">G-protein coupled receptor</keyword>
<keyword id="KW-0325">Glycoprotein</keyword>
<keyword id="KW-0472">Membrane</keyword>
<keyword id="KW-0552">Olfaction</keyword>
<keyword id="KW-0675">Receptor</keyword>
<keyword id="KW-1185">Reference proteome</keyword>
<keyword id="KW-0716">Sensory transduction</keyword>
<keyword id="KW-0807">Transducer</keyword>
<keyword id="KW-0812">Transmembrane</keyword>
<keyword id="KW-1133">Transmembrane helix</keyword>
<name>O51S1_HUMAN</name>
<reference key="1">
    <citation type="submission" date="2001-07" db="EMBL/GenBank/DDBJ databases">
        <title>Genome-wide discovery and analysis of human seven transmembrane helix receptor genes.</title>
        <authorList>
            <person name="Suwa M."/>
            <person name="Sato T."/>
            <person name="Okouchi I."/>
            <person name="Arita M."/>
            <person name="Futami K."/>
            <person name="Matsumoto S."/>
            <person name="Tsutsumi S."/>
            <person name="Aburatani H."/>
            <person name="Asai K."/>
            <person name="Akiyama Y."/>
        </authorList>
    </citation>
    <scope>NUCLEOTIDE SEQUENCE [GENOMIC DNA]</scope>
</reference>
<reference key="2">
    <citation type="journal article" date="2004" name="Genome Res.">
        <title>The status, quality, and expansion of the NIH full-length cDNA project: the Mammalian Gene Collection (MGC).</title>
        <authorList>
            <consortium name="The MGC Project Team"/>
        </authorList>
    </citation>
    <scope>NUCLEOTIDE SEQUENCE [LARGE SCALE MRNA]</scope>
    <source>
        <tissue>Testis</tissue>
    </source>
</reference>
<reference key="3">
    <citation type="journal article" date="2004" name="Proc. Natl. Acad. Sci. U.S.A.">
        <title>The human olfactory receptor gene family.</title>
        <authorList>
            <person name="Malnic B."/>
            <person name="Godfrey P.A."/>
            <person name="Buck L.B."/>
        </authorList>
    </citation>
    <scope>IDENTIFICATION</scope>
</reference>
<reference key="4">
    <citation type="journal article" date="2004" name="Proc. Natl. Acad. Sci. U.S.A.">
        <authorList>
            <person name="Malnic B."/>
            <person name="Godfrey P.A."/>
            <person name="Buck L.B."/>
        </authorList>
    </citation>
    <scope>ERRATUM OF PUBMED:14983052</scope>
</reference>
<proteinExistence type="evidence at transcript level"/>
<gene>
    <name type="primary">OR51S1</name>
</gene>
<dbReference type="EMBL" id="AB065796">
    <property type="protein sequence ID" value="BAC06015.1"/>
    <property type="molecule type" value="Genomic_DNA"/>
</dbReference>
<dbReference type="EMBL" id="BC136932">
    <property type="protein sequence ID" value="AAI36933.1"/>
    <property type="molecule type" value="mRNA"/>
</dbReference>
<dbReference type="EMBL" id="BC136934">
    <property type="protein sequence ID" value="AAI36935.1"/>
    <property type="molecule type" value="mRNA"/>
</dbReference>
<dbReference type="EMBL" id="BK004280">
    <property type="protein sequence ID" value="DAA04678.1"/>
    <property type="molecule type" value="Genomic_DNA"/>
</dbReference>
<dbReference type="CCDS" id="CCDS31362.1"/>
<dbReference type="RefSeq" id="NP_001004758.1">
    <property type="nucleotide sequence ID" value="NM_001004758.1"/>
</dbReference>
<dbReference type="SMR" id="Q8NGJ8"/>
<dbReference type="FunCoup" id="Q8NGJ8">
    <property type="interactions" value="457"/>
</dbReference>
<dbReference type="STRING" id="9606.ENSP00000322754"/>
<dbReference type="GlyCosmos" id="Q8NGJ8">
    <property type="glycosylation" value="1 site, No reported glycans"/>
</dbReference>
<dbReference type="GlyGen" id="Q8NGJ8">
    <property type="glycosylation" value="4 sites, 1 O-linked glycan (3 sites)"/>
</dbReference>
<dbReference type="BioMuta" id="OR51S1"/>
<dbReference type="DMDM" id="38372710"/>
<dbReference type="MassIVE" id="Q8NGJ8"/>
<dbReference type="PaxDb" id="9606-ENSP00000322754"/>
<dbReference type="Antibodypedia" id="57560">
    <property type="antibodies" value="97 antibodies from 20 providers"/>
</dbReference>
<dbReference type="DNASU" id="119692"/>
<dbReference type="Ensembl" id="ENST00000322101.5">
    <property type="protein sequence ID" value="ENSP00000322754.2"/>
    <property type="gene ID" value="ENSG00000176922.5"/>
</dbReference>
<dbReference type="GeneID" id="119692"/>
<dbReference type="KEGG" id="hsa:119692"/>
<dbReference type="MANE-Select" id="ENST00000322101.5">
    <property type="protein sequence ID" value="ENSP00000322754.2"/>
    <property type="RefSeq nucleotide sequence ID" value="NM_001004758.1"/>
    <property type="RefSeq protein sequence ID" value="NP_001004758.1"/>
</dbReference>
<dbReference type="UCSC" id="uc010qyo.2">
    <property type="organism name" value="human"/>
</dbReference>
<dbReference type="AGR" id="HGNC:15204"/>
<dbReference type="CTD" id="119692"/>
<dbReference type="GeneCards" id="OR51S1"/>
<dbReference type="HGNC" id="HGNC:15204">
    <property type="gene designation" value="OR51S1"/>
</dbReference>
<dbReference type="HPA" id="ENSG00000176922">
    <property type="expression patterns" value="Not detected"/>
</dbReference>
<dbReference type="neXtProt" id="NX_Q8NGJ8"/>
<dbReference type="OpenTargets" id="ENSG00000176922"/>
<dbReference type="PharmGKB" id="PA32390"/>
<dbReference type="VEuPathDB" id="HostDB:ENSG00000176922"/>
<dbReference type="eggNOG" id="ENOG502RF9W">
    <property type="taxonomic scope" value="Eukaryota"/>
</dbReference>
<dbReference type="GeneTree" id="ENSGT01130000278286"/>
<dbReference type="HOGENOM" id="CLU_012526_0_0_1"/>
<dbReference type="InParanoid" id="Q8NGJ8"/>
<dbReference type="OMA" id="RPMHFFL"/>
<dbReference type="OrthoDB" id="9444602at2759"/>
<dbReference type="PAN-GO" id="Q8NGJ8">
    <property type="GO annotations" value="2 GO annotations based on evolutionary models"/>
</dbReference>
<dbReference type="PhylomeDB" id="Q8NGJ8"/>
<dbReference type="TreeFam" id="TF342735"/>
<dbReference type="PathwayCommons" id="Q8NGJ8"/>
<dbReference type="Reactome" id="R-HSA-9752946">
    <property type="pathway name" value="Expression and translocation of olfactory receptors"/>
</dbReference>
<dbReference type="BioGRID-ORCS" id="119692">
    <property type="hits" value="11 hits in 760 CRISPR screens"/>
</dbReference>
<dbReference type="GeneWiki" id="OR51S1"/>
<dbReference type="GenomeRNAi" id="119692"/>
<dbReference type="Pharos" id="Q8NGJ8">
    <property type="development level" value="Tdark"/>
</dbReference>
<dbReference type="PRO" id="PR:Q8NGJ8"/>
<dbReference type="Proteomes" id="UP000005640">
    <property type="component" value="Chromosome 11"/>
</dbReference>
<dbReference type="RNAct" id="Q8NGJ8">
    <property type="molecule type" value="protein"/>
</dbReference>
<dbReference type="ExpressionAtlas" id="Q8NGJ8">
    <property type="expression patterns" value="baseline and differential"/>
</dbReference>
<dbReference type="GO" id="GO:0005886">
    <property type="term" value="C:plasma membrane"/>
    <property type="evidence" value="ECO:0000318"/>
    <property type="project" value="GO_Central"/>
</dbReference>
<dbReference type="GO" id="GO:0004930">
    <property type="term" value="F:G protein-coupled receptor activity"/>
    <property type="evidence" value="ECO:0007669"/>
    <property type="project" value="UniProtKB-KW"/>
</dbReference>
<dbReference type="GO" id="GO:0004984">
    <property type="term" value="F:olfactory receptor activity"/>
    <property type="evidence" value="ECO:0000318"/>
    <property type="project" value="GO_Central"/>
</dbReference>
<dbReference type="FunFam" id="1.20.1070.10:FF:000013">
    <property type="entry name" value="Olfactory receptor"/>
    <property type="match status" value="1"/>
</dbReference>
<dbReference type="Gene3D" id="1.20.1070.10">
    <property type="entry name" value="Rhodopsin 7-helix transmembrane proteins"/>
    <property type="match status" value="1"/>
</dbReference>
<dbReference type="InterPro" id="IPR000276">
    <property type="entry name" value="GPCR_Rhodpsn"/>
</dbReference>
<dbReference type="InterPro" id="IPR017452">
    <property type="entry name" value="GPCR_Rhodpsn_7TM"/>
</dbReference>
<dbReference type="InterPro" id="IPR000725">
    <property type="entry name" value="Olfact_rcpt"/>
</dbReference>
<dbReference type="InterPro" id="IPR050402">
    <property type="entry name" value="OR51/52/56-like"/>
</dbReference>
<dbReference type="PANTHER" id="PTHR26450:SF73">
    <property type="entry name" value="OLFACTORY RECEPTOR 51S1"/>
    <property type="match status" value="1"/>
</dbReference>
<dbReference type="PANTHER" id="PTHR26450">
    <property type="entry name" value="OLFACTORY RECEPTOR 56B1-RELATED"/>
    <property type="match status" value="1"/>
</dbReference>
<dbReference type="Pfam" id="PF13853">
    <property type="entry name" value="7tm_4"/>
    <property type="match status" value="1"/>
</dbReference>
<dbReference type="PRINTS" id="PR00237">
    <property type="entry name" value="GPCRRHODOPSN"/>
</dbReference>
<dbReference type="PRINTS" id="PR00245">
    <property type="entry name" value="OLFACTORYR"/>
</dbReference>
<dbReference type="SUPFAM" id="SSF81321">
    <property type="entry name" value="Family A G protein-coupled receptor-like"/>
    <property type="match status" value="1"/>
</dbReference>
<dbReference type="PROSITE" id="PS50262">
    <property type="entry name" value="G_PROTEIN_RECEP_F1_2"/>
    <property type="match status" value="1"/>
</dbReference>
<feature type="chain" id="PRO_0000150762" description="Olfactory receptor 51S1">
    <location>
        <begin position="1"/>
        <end position="323"/>
    </location>
</feature>
<feature type="topological domain" description="Extracellular" evidence="1">
    <location>
        <begin position="1"/>
        <end position="33"/>
    </location>
</feature>
<feature type="transmembrane region" description="Helical; Name=1" evidence="1">
    <location>
        <begin position="34"/>
        <end position="54"/>
    </location>
</feature>
<feature type="topological domain" description="Cytoplasmic" evidence="1">
    <location>
        <begin position="55"/>
        <end position="62"/>
    </location>
</feature>
<feature type="transmembrane region" description="Helical; Name=2" evidence="1">
    <location>
        <begin position="63"/>
        <end position="83"/>
    </location>
</feature>
<feature type="topological domain" description="Extracellular" evidence="1">
    <location>
        <begin position="84"/>
        <end position="107"/>
    </location>
</feature>
<feature type="transmembrane region" description="Helical; Name=3" evidence="1">
    <location>
        <begin position="108"/>
        <end position="128"/>
    </location>
</feature>
<feature type="topological domain" description="Cytoplasmic" evidence="1">
    <location>
        <begin position="129"/>
        <end position="147"/>
    </location>
</feature>
<feature type="transmembrane region" description="Helical; Name=4" evidence="1">
    <location>
        <begin position="148"/>
        <end position="168"/>
    </location>
</feature>
<feature type="topological domain" description="Extracellular" evidence="1">
    <location>
        <begin position="169"/>
        <end position="203"/>
    </location>
</feature>
<feature type="transmembrane region" description="Helical; Name=5" evidence="1">
    <location>
        <begin position="204"/>
        <end position="224"/>
    </location>
</feature>
<feature type="topological domain" description="Cytoplasmic" evidence="1">
    <location>
        <begin position="225"/>
        <end position="244"/>
    </location>
</feature>
<feature type="transmembrane region" description="Helical; Name=6" evidence="1">
    <location>
        <begin position="245"/>
        <end position="265"/>
    </location>
</feature>
<feature type="topological domain" description="Extracellular" evidence="1">
    <location>
        <begin position="266"/>
        <end position="280"/>
    </location>
</feature>
<feature type="transmembrane region" description="Helical; Name=7" evidence="1">
    <location>
        <begin position="281"/>
        <end position="301"/>
    </location>
</feature>
<feature type="topological domain" description="Cytoplasmic" evidence="1">
    <location>
        <begin position="302"/>
        <end position="323"/>
    </location>
</feature>
<feature type="glycosylation site" description="N-linked (GlcNAc...) asparagine" evidence="1">
    <location>
        <position position="11"/>
    </location>
</feature>
<feature type="disulfide bond" evidence="2">
    <location>
        <begin position="105"/>
        <end position="197"/>
    </location>
</feature>
<feature type="sequence variant" id="VAR_034329" description="In dbSNP:rs12417164.">
    <original>I</original>
    <variation>N</variation>
    <location>
        <position position="57"/>
    </location>
</feature>
<feature type="sequence variant" id="VAR_034330" description="In dbSNP:rs11602499.">
    <original>Q</original>
    <variation>E</variation>
    <location>
        <position position="60"/>
    </location>
</feature>
<feature type="sequence variant" id="VAR_024145" description="In dbSNP:rs7117260.">
    <original>L</original>
    <variation>R</variation>
    <location>
        <position position="178"/>
    </location>
</feature>
<feature type="sequence variant" id="VAR_053331" description="In dbSNP:rs12361955.">
    <original>L</original>
    <variation>F</variation>
    <location>
        <position position="264"/>
    </location>
</feature>